<keyword id="KW-0067">ATP-binding</keyword>
<keyword id="KW-0378">Hydrolase</keyword>
<keyword id="KW-0460">Magnesium</keyword>
<keyword id="KW-0479">Metal-binding</keyword>
<keyword id="KW-0511">Multifunctional enzyme</keyword>
<keyword id="KW-0533">Nickel</keyword>
<keyword id="KW-0547">Nucleotide-binding</keyword>
<keyword id="KW-0548">Nucleotidyltransferase</keyword>
<keyword id="KW-0692">RNA repair</keyword>
<keyword id="KW-0694">RNA-binding</keyword>
<keyword id="KW-0808">Transferase</keyword>
<keyword id="KW-0819">tRNA processing</keyword>
<dbReference type="EC" id="2.7.7.72" evidence="1"/>
<dbReference type="EC" id="3.1.3.-" evidence="1"/>
<dbReference type="EC" id="3.1.4.-" evidence="1"/>
<dbReference type="EMBL" id="CP000243">
    <property type="protein sequence ID" value="ABE08939.1"/>
    <property type="molecule type" value="Genomic_DNA"/>
</dbReference>
<dbReference type="RefSeq" id="WP_000708479.1">
    <property type="nucleotide sequence ID" value="NZ_CP064825.1"/>
</dbReference>
<dbReference type="SMR" id="Q1R6S5"/>
<dbReference type="KEGG" id="eci:UTI89_C3492"/>
<dbReference type="HOGENOM" id="CLU_015961_1_1_6"/>
<dbReference type="Proteomes" id="UP000001952">
    <property type="component" value="Chromosome"/>
</dbReference>
<dbReference type="GO" id="GO:0005524">
    <property type="term" value="F:ATP binding"/>
    <property type="evidence" value="ECO:0007669"/>
    <property type="project" value="UniProtKB-UniRule"/>
</dbReference>
<dbReference type="GO" id="GO:0004810">
    <property type="term" value="F:CCA tRNA nucleotidyltransferase activity"/>
    <property type="evidence" value="ECO:0007669"/>
    <property type="project" value="UniProtKB-UniRule"/>
</dbReference>
<dbReference type="GO" id="GO:0004112">
    <property type="term" value="F:cyclic-nucleotide phosphodiesterase activity"/>
    <property type="evidence" value="ECO:0007669"/>
    <property type="project" value="UniProtKB-UniRule"/>
</dbReference>
<dbReference type="GO" id="GO:0000287">
    <property type="term" value="F:magnesium ion binding"/>
    <property type="evidence" value="ECO:0007669"/>
    <property type="project" value="UniProtKB-UniRule"/>
</dbReference>
<dbReference type="GO" id="GO:0016791">
    <property type="term" value="F:phosphatase activity"/>
    <property type="evidence" value="ECO:0007669"/>
    <property type="project" value="UniProtKB-UniRule"/>
</dbReference>
<dbReference type="GO" id="GO:0000049">
    <property type="term" value="F:tRNA binding"/>
    <property type="evidence" value="ECO:0007669"/>
    <property type="project" value="UniProtKB-UniRule"/>
</dbReference>
<dbReference type="GO" id="GO:0042245">
    <property type="term" value="P:RNA repair"/>
    <property type="evidence" value="ECO:0007669"/>
    <property type="project" value="UniProtKB-KW"/>
</dbReference>
<dbReference type="GO" id="GO:0001680">
    <property type="term" value="P:tRNA 3'-terminal CCA addition"/>
    <property type="evidence" value="ECO:0007669"/>
    <property type="project" value="UniProtKB-UniRule"/>
</dbReference>
<dbReference type="CDD" id="cd00077">
    <property type="entry name" value="HDc"/>
    <property type="match status" value="1"/>
</dbReference>
<dbReference type="CDD" id="cd05398">
    <property type="entry name" value="NT_ClassII-CCAase"/>
    <property type="match status" value="1"/>
</dbReference>
<dbReference type="FunFam" id="1.10.3090.10:FF:000001">
    <property type="entry name" value="Multifunctional CCA protein"/>
    <property type="match status" value="1"/>
</dbReference>
<dbReference type="FunFam" id="3.30.460.10:FF:000016">
    <property type="entry name" value="Multifunctional CCA protein"/>
    <property type="match status" value="1"/>
</dbReference>
<dbReference type="Gene3D" id="3.30.460.10">
    <property type="entry name" value="Beta Polymerase, domain 2"/>
    <property type="match status" value="1"/>
</dbReference>
<dbReference type="Gene3D" id="1.10.3090.10">
    <property type="entry name" value="cca-adding enzyme, domain 2"/>
    <property type="match status" value="1"/>
</dbReference>
<dbReference type="HAMAP" id="MF_01261">
    <property type="entry name" value="CCA_bact_type1"/>
    <property type="match status" value="1"/>
</dbReference>
<dbReference type="HAMAP" id="MF_01262">
    <property type="entry name" value="CCA_bact_type2"/>
    <property type="match status" value="1"/>
</dbReference>
<dbReference type="InterPro" id="IPR012006">
    <property type="entry name" value="CCA_bact"/>
</dbReference>
<dbReference type="InterPro" id="IPR003607">
    <property type="entry name" value="HD/PDEase_dom"/>
</dbReference>
<dbReference type="InterPro" id="IPR006674">
    <property type="entry name" value="HD_domain"/>
</dbReference>
<dbReference type="InterPro" id="IPR043519">
    <property type="entry name" value="NT_sf"/>
</dbReference>
<dbReference type="InterPro" id="IPR002646">
    <property type="entry name" value="PolA_pol_head_dom"/>
</dbReference>
<dbReference type="InterPro" id="IPR032828">
    <property type="entry name" value="PolyA_RNA-bd"/>
</dbReference>
<dbReference type="InterPro" id="IPR050124">
    <property type="entry name" value="tRNA_CCA-adding_enzyme"/>
</dbReference>
<dbReference type="NCBIfam" id="NF008137">
    <property type="entry name" value="PRK10885.1"/>
    <property type="match status" value="1"/>
</dbReference>
<dbReference type="PANTHER" id="PTHR47545">
    <property type="entry name" value="MULTIFUNCTIONAL CCA PROTEIN"/>
    <property type="match status" value="1"/>
</dbReference>
<dbReference type="PANTHER" id="PTHR47545:SF1">
    <property type="entry name" value="MULTIFUNCTIONAL CCA PROTEIN"/>
    <property type="match status" value="1"/>
</dbReference>
<dbReference type="Pfam" id="PF01966">
    <property type="entry name" value="HD"/>
    <property type="match status" value="1"/>
</dbReference>
<dbReference type="Pfam" id="PF01743">
    <property type="entry name" value="PolyA_pol"/>
    <property type="match status" value="1"/>
</dbReference>
<dbReference type="Pfam" id="PF12627">
    <property type="entry name" value="PolyA_pol_RNAbd"/>
    <property type="match status" value="1"/>
</dbReference>
<dbReference type="PIRSF" id="PIRSF000813">
    <property type="entry name" value="CCA_bact"/>
    <property type="match status" value="1"/>
</dbReference>
<dbReference type="SUPFAM" id="SSF81301">
    <property type="entry name" value="Nucleotidyltransferase"/>
    <property type="match status" value="1"/>
</dbReference>
<dbReference type="SUPFAM" id="SSF81891">
    <property type="entry name" value="Poly A polymerase C-terminal region-like"/>
    <property type="match status" value="1"/>
</dbReference>
<dbReference type="PROSITE" id="PS51831">
    <property type="entry name" value="HD"/>
    <property type="match status" value="1"/>
</dbReference>
<comment type="function">
    <text evidence="1">Catalyzes the addition and repair of the essential 3'-terminal CCA sequence in tRNAs without using a nucleic acid template. Adds these three nucleotides in the order of C, C, and A to the tRNA nucleotide-73, using CTP and ATP as substrates and producing inorganic pyrophosphate. tRNA 3'-terminal CCA addition is required both for tRNA processing and repair. Also involved in tRNA surveillance by mediating tandem CCA addition to generate a CCACCA at the 3' terminus of unstable tRNAs. While stable tRNAs receive only 3'-terminal CCA, unstable tRNAs are marked with CCACCA and rapidly degraded.</text>
</comment>
<comment type="catalytic activity">
    <reaction evidence="1">
        <text>a tRNA precursor + 2 CTP + ATP = a tRNA with a 3' CCA end + 3 diphosphate</text>
        <dbReference type="Rhea" id="RHEA:14433"/>
        <dbReference type="Rhea" id="RHEA-COMP:10465"/>
        <dbReference type="Rhea" id="RHEA-COMP:10468"/>
        <dbReference type="ChEBI" id="CHEBI:30616"/>
        <dbReference type="ChEBI" id="CHEBI:33019"/>
        <dbReference type="ChEBI" id="CHEBI:37563"/>
        <dbReference type="ChEBI" id="CHEBI:74896"/>
        <dbReference type="ChEBI" id="CHEBI:83071"/>
        <dbReference type="EC" id="2.7.7.72"/>
    </reaction>
</comment>
<comment type="catalytic activity">
    <reaction evidence="1">
        <text>a tRNA with a 3' CCA end + 2 CTP + ATP = a tRNA with a 3' CCACCA end + 3 diphosphate</text>
        <dbReference type="Rhea" id="RHEA:76235"/>
        <dbReference type="Rhea" id="RHEA-COMP:10468"/>
        <dbReference type="Rhea" id="RHEA-COMP:18655"/>
        <dbReference type="ChEBI" id="CHEBI:30616"/>
        <dbReference type="ChEBI" id="CHEBI:33019"/>
        <dbReference type="ChEBI" id="CHEBI:37563"/>
        <dbReference type="ChEBI" id="CHEBI:83071"/>
        <dbReference type="ChEBI" id="CHEBI:195187"/>
    </reaction>
    <physiologicalReaction direction="left-to-right" evidence="1">
        <dbReference type="Rhea" id="RHEA:76236"/>
    </physiologicalReaction>
</comment>
<comment type="cofactor">
    <cofactor evidence="1">
        <name>Mg(2+)</name>
        <dbReference type="ChEBI" id="CHEBI:18420"/>
    </cofactor>
    <text evidence="1">Magnesium is required for nucleotidyltransferase activity.</text>
</comment>
<comment type="cofactor">
    <cofactor evidence="1">
        <name>Ni(2+)</name>
        <dbReference type="ChEBI" id="CHEBI:49786"/>
    </cofactor>
    <text evidence="1">Nickel for phosphatase activity.</text>
</comment>
<comment type="subunit">
    <text evidence="1">Monomer. Can also form homodimers and oligomers.</text>
</comment>
<comment type="domain">
    <text evidence="1">Comprises two domains: an N-terminal domain containing the nucleotidyltransferase activity and a C-terminal HD domain associated with both phosphodiesterase and phosphatase activities.</text>
</comment>
<comment type="miscellaneous">
    <text evidence="1">A single active site specifically recognizes both ATP and CTP and is responsible for their addition.</text>
</comment>
<comment type="similarity">
    <text evidence="1">Belongs to the tRNA nucleotidyltransferase/poly(A) polymerase family. Bacterial CCA-adding enzyme type 1 subfamily.</text>
</comment>
<feature type="chain" id="PRO_1000054264" description="Multifunctional CCA protein">
    <location>
        <begin position="1"/>
        <end position="412"/>
    </location>
</feature>
<feature type="domain" description="HD" evidence="1">
    <location>
        <begin position="228"/>
        <end position="329"/>
    </location>
</feature>
<feature type="binding site" evidence="1">
    <location>
        <position position="8"/>
    </location>
    <ligand>
        <name>ATP</name>
        <dbReference type="ChEBI" id="CHEBI:30616"/>
    </ligand>
</feature>
<feature type="binding site" evidence="1">
    <location>
        <position position="8"/>
    </location>
    <ligand>
        <name>CTP</name>
        <dbReference type="ChEBI" id="CHEBI:37563"/>
    </ligand>
</feature>
<feature type="binding site" evidence="1">
    <location>
        <position position="11"/>
    </location>
    <ligand>
        <name>ATP</name>
        <dbReference type="ChEBI" id="CHEBI:30616"/>
    </ligand>
</feature>
<feature type="binding site" evidence="1">
    <location>
        <position position="11"/>
    </location>
    <ligand>
        <name>CTP</name>
        <dbReference type="ChEBI" id="CHEBI:37563"/>
    </ligand>
</feature>
<feature type="binding site" evidence="1">
    <location>
        <position position="21"/>
    </location>
    <ligand>
        <name>Mg(2+)</name>
        <dbReference type="ChEBI" id="CHEBI:18420"/>
    </ligand>
</feature>
<feature type="binding site" evidence="1">
    <location>
        <position position="23"/>
    </location>
    <ligand>
        <name>Mg(2+)</name>
        <dbReference type="ChEBI" id="CHEBI:18420"/>
    </ligand>
</feature>
<feature type="binding site" evidence="1">
    <location>
        <position position="91"/>
    </location>
    <ligand>
        <name>ATP</name>
        <dbReference type="ChEBI" id="CHEBI:30616"/>
    </ligand>
</feature>
<feature type="binding site" evidence="1">
    <location>
        <position position="91"/>
    </location>
    <ligand>
        <name>CTP</name>
        <dbReference type="ChEBI" id="CHEBI:37563"/>
    </ligand>
</feature>
<feature type="binding site" evidence="1">
    <location>
        <position position="137"/>
    </location>
    <ligand>
        <name>ATP</name>
        <dbReference type="ChEBI" id="CHEBI:30616"/>
    </ligand>
</feature>
<feature type="binding site" evidence="1">
    <location>
        <position position="137"/>
    </location>
    <ligand>
        <name>CTP</name>
        <dbReference type="ChEBI" id="CHEBI:37563"/>
    </ligand>
</feature>
<feature type="binding site" evidence="1">
    <location>
        <position position="140"/>
    </location>
    <ligand>
        <name>ATP</name>
        <dbReference type="ChEBI" id="CHEBI:30616"/>
    </ligand>
</feature>
<feature type="binding site" evidence="1">
    <location>
        <position position="140"/>
    </location>
    <ligand>
        <name>CTP</name>
        <dbReference type="ChEBI" id="CHEBI:37563"/>
    </ligand>
</feature>
<organism>
    <name type="scientific">Escherichia coli (strain UTI89 / UPEC)</name>
    <dbReference type="NCBI Taxonomy" id="364106"/>
    <lineage>
        <taxon>Bacteria</taxon>
        <taxon>Pseudomonadati</taxon>
        <taxon>Pseudomonadota</taxon>
        <taxon>Gammaproteobacteria</taxon>
        <taxon>Enterobacterales</taxon>
        <taxon>Enterobacteriaceae</taxon>
        <taxon>Escherichia</taxon>
    </lineage>
</organism>
<sequence length="412" mass="46538">MKIYLVGGAVRDALLGLPVKDRDWVVVGSTPQEMLDAGYQQVGRDFPVFLHPQTHEEYALARTERKSGSGYTGFTCYAAPDVTLEDDLKRRDLTINALAQDDNGEIIDPYNGLGDLQNRLLRHVSPAFGEDPLRVLRVARFAARYAHLCFRIADETLALMREMTHAGELEHLTPERVWKETENALTTRNPQVFFQVLRDCGALRVLFPEIDALFGVPAPARWHPEIDTGIHTLMTLSMAAMLSPQVDVRFATLCHDLGKGLTPPELWPRHHGHGPAGVKLVEQLCQRLRVPNEIRDLARLVAEFHDLIHTFPMLNPKTIVKLFDSIDAWRKPQRVEQLALTSEADVRGRTGFESADYPQGRWLREAWEVAQSVPTKAVVEAGFKGVEIREELTRRRIAAVAGWKEQRCPKPE</sequence>
<gene>
    <name evidence="1" type="primary">cca</name>
    <name type="ordered locus">UTI89_C3492</name>
</gene>
<proteinExistence type="inferred from homology"/>
<evidence type="ECO:0000255" key="1">
    <source>
        <dbReference type="HAMAP-Rule" id="MF_01261"/>
    </source>
</evidence>
<protein>
    <recommendedName>
        <fullName evidence="1">Multifunctional CCA protein</fullName>
    </recommendedName>
    <domain>
        <recommendedName>
            <fullName evidence="1">CCA-adding enzyme</fullName>
            <ecNumber evidence="1">2.7.7.72</ecNumber>
        </recommendedName>
        <alternativeName>
            <fullName evidence="1">CCA tRNA nucleotidyltransferase</fullName>
        </alternativeName>
        <alternativeName>
            <fullName evidence="1">tRNA CCA-pyrophosphorylase</fullName>
        </alternativeName>
        <alternativeName>
            <fullName evidence="1">tRNA adenylyl-/cytidylyl-transferase</fullName>
        </alternativeName>
        <alternativeName>
            <fullName evidence="1">tRNA nucleotidyltransferase</fullName>
        </alternativeName>
        <alternativeName>
            <fullName evidence="1">tRNA-NT</fullName>
        </alternativeName>
    </domain>
    <domain>
        <recommendedName>
            <fullName evidence="1">2'-nucleotidase</fullName>
            <ecNumber evidence="1">3.1.3.-</ecNumber>
        </recommendedName>
    </domain>
    <domain>
        <recommendedName>
            <fullName evidence="1">2',3'-cyclic phosphodiesterase</fullName>
            <ecNumber evidence="1">3.1.4.-</ecNumber>
        </recommendedName>
    </domain>
    <domain>
        <recommendedName>
            <fullName evidence="1">Phosphatase</fullName>
            <ecNumber evidence="1">3.1.3.-</ecNumber>
        </recommendedName>
    </domain>
</protein>
<reference key="1">
    <citation type="journal article" date="2006" name="Proc. Natl. Acad. Sci. U.S.A.">
        <title>Identification of genes subject to positive selection in uropathogenic strains of Escherichia coli: a comparative genomics approach.</title>
        <authorList>
            <person name="Chen S.L."/>
            <person name="Hung C.-S."/>
            <person name="Xu J."/>
            <person name="Reigstad C.S."/>
            <person name="Magrini V."/>
            <person name="Sabo A."/>
            <person name="Blasiar D."/>
            <person name="Bieri T."/>
            <person name="Meyer R.R."/>
            <person name="Ozersky P."/>
            <person name="Armstrong J.R."/>
            <person name="Fulton R.S."/>
            <person name="Latreille J.P."/>
            <person name="Spieth J."/>
            <person name="Hooton T.M."/>
            <person name="Mardis E.R."/>
            <person name="Hultgren S.J."/>
            <person name="Gordon J.I."/>
        </authorList>
    </citation>
    <scope>NUCLEOTIDE SEQUENCE [LARGE SCALE GENOMIC DNA]</scope>
    <source>
        <strain>UTI89 / UPEC</strain>
    </source>
</reference>
<accession>Q1R6S5</accession>
<name>CCA_ECOUT</name>